<proteinExistence type="inferred from homology"/>
<dbReference type="EC" id="1.5.1.5" evidence="1"/>
<dbReference type="EC" id="3.5.4.9" evidence="1"/>
<dbReference type="EMBL" id="CR555306">
    <property type="protein sequence ID" value="CAI06187.1"/>
    <property type="status" value="ALT_INIT"/>
    <property type="molecule type" value="Genomic_DNA"/>
</dbReference>
<dbReference type="RefSeq" id="WP_041645364.1">
    <property type="nucleotide sequence ID" value="NC_006513.1"/>
</dbReference>
<dbReference type="SMR" id="Q5P922"/>
<dbReference type="STRING" id="76114.ebA118"/>
<dbReference type="KEGG" id="eba:ebA118"/>
<dbReference type="eggNOG" id="COG0190">
    <property type="taxonomic scope" value="Bacteria"/>
</dbReference>
<dbReference type="HOGENOM" id="CLU_034045_2_1_4"/>
<dbReference type="OrthoDB" id="9803580at2"/>
<dbReference type="UniPathway" id="UPA00193"/>
<dbReference type="Proteomes" id="UP000006552">
    <property type="component" value="Chromosome"/>
</dbReference>
<dbReference type="GO" id="GO:0005829">
    <property type="term" value="C:cytosol"/>
    <property type="evidence" value="ECO:0007669"/>
    <property type="project" value="TreeGrafter"/>
</dbReference>
<dbReference type="GO" id="GO:0004477">
    <property type="term" value="F:methenyltetrahydrofolate cyclohydrolase activity"/>
    <property type="evidence" value="ECO:0007669"/>
    <property type="project" value="UniProtKB-UniRule"/>
</dbReference>
<dbReference type="GO" id="GO:0004488">
    <property type="term" value="F:methylenetetrahydrofolate dehydrogenase (NADP+) activity"/>
    <property type="evidence" value="ECO:0007669"/>
    <property type="project" value="UniProtKB-UniRule"/>
</dbReference>
<dbReference type="GO" id="GO:0000105">
    <property type="term" value="P:L-histidine biosynthetic process"/>
    <property type="evidence" value="ECO:0007669"/>
    <property type="project" value="UniProtKB-KW"/>
</dbReference>
<dbReference type="GO" id="GO:0009086">
    <property type="term" value="P:methionine biosynthetic process"/>
    <property type="evidence" value="ECO:0007669"/>
    <property type="project" value="UniProtKB-KW"/>
</dbReference>
<dbReference type="GO" id="GO:0006164">
    <property type="term" value="P:purine nucleotide biosynthetic process"/>
    <property type="evidence" value="ECO:0007669"/>
    <property type="project" value="UniProtKB-KW"/>
</dbReference>
<dbReference type="GO" id="GO:0035999">
    <property type="term" value="P:tetrahydrofolate interconversion"/>
    <property type="evidence" value="ECO:0007669"/>
    <property type="project" value="UniProtKB-UniRule"/>
</dbReference>
<dbReference type="CDD" id="cd01080">
    <property type="entry name" value="NAD_bind_m-THF_DH_Cyclohyd"/>
    <property type="match status" value="1"/>
</dbReference>
<dbReference type="FunFam" id="3.40.50.720:FF:000006">
    <property type="entry name" value="Bifunctional protein FolD"/>
    <property type="match status" value="1"/>
</dbReference>
<dbReference type="FunFam" id="3.40.50.10860:FF:000005">
    <property type="entry name" value="C-1-tetrahydrofolate synthase, cytoplasmic, putative"/>
    <property type="match status" value="1"/>
</dbReference>
<dbReference type="Gene3D" id="3.40.50.10860">
    <property type="entry name" value="Leucine Dehydrogenase, chain A, domain 1"/>
    <property type="match status" value="1"/>
</dbReference>
<dbReference type="Gene3D" id="3.40.50.720">
    <property type="entry name" value="NAD(P)-binding Rossmann-like Domain"/>
    <property type="match status" value="1"/>
</dbReference>
<dbReference type="HAMAP" id="MF_01576">
    <property type="entry name" value="THF_DHG_CYH"/>
    <property type="match status" value="1"/>
</dbReference>
<dbReference type="InterPro" id="IPR046346">
    <property type="entry name" value="Aminoacid_DH-like_N_sf"/>
</dbReference>
<dbReference type="InterPro" id="IPR036291">
    <property type="entry name" value="NAD(P)-bd_dom_sf"/>
</dbReference>
<dbReference type="InterPro" id="IPR000672">
    <property type="entry name" value="THF_DH/CycHdrlase"/>
</dbReference>
<dbReference type="InterPro" id="IPR020630">
    <property type="entry name" value="THF_DH/CycHdrlase_cat_dom"/>
</dbReference>
<dbReference type="InterPro" id="IPR020867">
    <property type="entry name" value="THF_DH/CycHdrlase_CS"/>
</dbReference>
<dbReference type="InterPro" id="IPR020631">
    <property type="entry name" value="THF_DH/CycHdrlase_NAD-bd_dom"/>
</dbReference>
<dbReference type="NCBIfam" id="NF008058">
    <property type="entry name" value="PRK10792.1"/>
    <property type="match status" value="1"/>
</dbReference>
<dbReference type="NCBIfam" id="NF010783">
    <property type="entry name" value="PRK14186.1"/>
    <property type="match status" value="1"/>
</dbReference>
<dbReference type="NCBIfam" id="NF010786">
    <property type="entry name" value="PRK14189.1"/>
    <property type="match status" value="1"/>
</dbReference>
<dbReference type="PANTHER" id="PTHR48099:SF5">
    <property type="entry name" value="C-1-TETRAHYDROFOLATE SYNTHASE, CYTOPLASMIC"/>
    <property type="match status" value="1"/>
</dbReference>
<dbReference type="PANTHER" id="PTHR48099">
    <property type="entry name" value="C-1-TETRAHYDROFOLATE SYNTHASE, CYTOPLASMIC-RELATED"/>
    <property type="match status" value="1"/>
</dbReference>
<dbReference type="Pfam" id="PF00763">
    <property type="entry name" value="THF_DHG_CYH"/>
    <property type="match status" value="1"/>
</dbReference>
<dbReference type="Pfam" id="PF02882">
    <property type="entry name" value="THF_DHG_CYH_C"/>
    <property type="match status" value="1"/>
</dbReference>
<dbReference type="PRINTS" id="PR00085">
    <property type="entry name" value="THFDHDRGNASE"/>
</dbReference>
<dbReference type="SUPFAM" id="SSF53223">
    <property type="entry name" value="Aminoacid dehydrogenase-like, N-terminal domain"/>
    <property type="match status" value="1"/>
</dbReference>
<dbReference type="SUPFAM" id="SSF51735">
    <property type="entry name" value="NAD(P)-binding Rossmann-fold domains"/>
    <property type="match status" value="1"/>
</dbReference>
<dbReference type="PROSITE" id="PS00767">
    <property type="entry name" value="THF_DHG_CYH_2"/>
    <property type="match status" value="1"/>
</dbReference>
<gene>
    <name evidence="1" type="primary">folD</name>
    <name type="ordered locus">AZOSEA00670</name>
    <name type="ORF">ebA118</name>
</gene>
<reference key="1">
    <citation type="journal article" date="2005" name="Arch. Microbiol.">
        <title>The genome sequence of an anaerobic aromatic-degrading denitrifying bacterium, strain EbN1.</title>
        <authorList>
            <person name="Rabus R."/>
            <person name="Kube M."/>
            <person name="Heider J."/>
            <person name="Beck A."/>
            <person name="Heitmann K."/>
            <person name="Widdel F."/>
            <person name="Reinhardt R."/>
        </authorList>
    </citation>
    <scope>NUCLEOTIDE SEQUENCE [LARGE SCALE GENOMIC DNA]</scope>
    <source>
        <strain>DSM 19018 / LMG 30748 / EbN1</strain>
    </source>
</reference>
<evidence type="ECO:0000255" key="1">
    <source>
        <dbReference type="HAMAP-Rule" id="MF_01576"/>
    </source>
</evidence>
<evidence type="ECO:0000305" key="2"/>
<comment type="function">
    <text evidence="1">Catalyzes the oxidation of 5,10-methylenetetrahydrofolate to 5,10-methenyltetrahydrofolate and then the hydrolysis of 5,10-methenyltetrahydrofolate to 10-formyltetrahydrofolate.</text>
</comment>
<comment type="catalytic activity">
    <reaction evidence="1">
        <text>(6R)-5,10-methylene-5,6,7,8-tetrahydrofolate + NADP(+) = (6R)-5,10-methenyltetrahydrofolate + NADPH</text>
        <dbReference type="Rhea" id="RHEA:22812"/>
        <dbReference type="ChEBI" id="CHEBI:15636"/>
        <dbReference type="ChEBI" id="CHEBI:57455"/>
        <dbReference type="ChEBI" id="CHEBI:57783"/>
        <dbReference type="ChEBI" id="CHEBI:58349"/>
        <dbReference type="EC" id="1.5.1.5"/>
    </reaction>
</comment>
<comment type="catalytic activity">
    <reaction evidence="1">
        <text>(6R)-5,10-methenyltetrahydrofolate + H2O = (6R)-10-formyltetrahydrofolate + H(+)</text>
        <dbReference type="Rhea" id="RHEA:23700"/>
        <dbReference type="ChEBI" id="CHEBI:15377"/>
        <dbReference type="ChEBI" id="CHEBI:15378"/>
        <dbReference type="ChEBI" id="CHEBI:57455"/>
        <dbReference type="ChEBI" id="CHEBI:195366"/>
        <dbReference type="EC" id="3.5.4.9"/>
    </reaction>
</comment>
<comment type="pathway">
    <text evidence="1">One-carbon metabolism; tetrahydrofolate interconversion.</text>
</comment>
<comment type="subunit">
    <text evidence="1">Homodimer.</text>
</comment>
<comment type="similarity">
    <text evidence="1">Belongs to the tetrahydrofolate dehydrogenase/cyclohydrolase family.</text>
</comment>
<comment type="sequence caution" evidence="2">
    <conflict type="erroneous initiation">
        <sequence resource="EMBL-CDS" id="CAI06187"/>
    </conflict>
</comment>
<feature type="chain" id="PRO_0000268264" description="Bifunctional protein FolD">
    <location>
        <begin position="1"/>
        <end position="290"/>
    </location>
</feature>
<feature type="binding site" evidence="1">
    <location>
        <begin position="165"/>
        <end position="167"/>
    </location>
    <ligand>
        <name>NADP(+)</name>
        <dbReference type="ChEBI" id="CHEBI:58349"/>
    </ligand>
</feature>
<feature type="binding site" evidence="1">
    <location>
        <position position="190"/>
    </location>
    <ligand>
        <name>NADP(+)</name>
        <dbReference type="ChEBI" id="CHEBI:58349"/>
    </ligand>
</feature>
<feature type="binding site" evidence="1">
    <location>
        <position position="231"/>
    </location>
    <ligand>
        <name>NADP(+)</name>
        <dbReference type="ChEBI" id="CHEBI:58349"/>
    </ligand>
</feature>
<accession>Q5P922</accession>
<name>FOLD_AROAE</name>
<protein>
    <recommendedName>
        <fullName evidence="1">Bifunctional protein FolD</fullName>
    </recommendedName>
    <domain>
        <recommendedName>
            <fullName evidence="1">Methylenetetrahydrofolate dehydrogenase</fullName>
            <ecNumber evidence="1">1.5.1.5</ecNumber>
        </recommendedName>
    </domain>
    <domain>
        <recommendedName>
            <fullName evidence="1">Methenyltetrahydrofolate cyclohydrolase</fullName>
            <ecNumber evidence="1">3.5.4.9</ecNumber>
        </recommendedName>
    </domain>
</protein>
<sequence>MTARILDGNALSARVRGELAERAAALADGGVQPCLAVILVGVNPASAVYVRNKVAACEKAGIRSLRFDFAADVDAAEVMAKIAELNADSAVHGVLVQLPLPKQFNEAEVLEAIRVEKDVDGFHAENVGRLSQGQEAFLPCTPHGVMKMLEAGGVPVQGAEAVVIGRSNIVGKPMAMLLTNAGATVTVTHSKTRDLAFHTRRADILVAAIGKPRFVTGDMIKPGAVVIDVGINRLTEGPDAGKLCGDVDFESAKEVASLITPVPGGVGPMTITMLLANTVESAERVARSKG</sequence>
<keyword id="KW-0028">Amino-acid biosynthesis</keyword>
<keyword id="KW-0368">Histidine biosynthesis</keyword>
<keyword id="KW-0378">Hydrolase</keyword>
<keyword id="KW-0486">Methionine biosynthesis</keyword>
<keyword id="KW-0511">Multifunctional enzyme</keyword>
<keyword id="KW-0521">NADP</keyword>
<keyword id="KW-0554">One-carbon metabolism</keyword>
<keyword id="KW-0560">Oxidoreductase</keyword>
<keyword id="KW-0658">Purine biosynthesis</keyword>
<keyword id="KW-1185">Reference proteome</keyword>
<organism>
    <name type="scientific">Aromatoleum aromaticum (strain DSM 19018 / LMG 30748 / EbN1)</name>
    <name type="common">Azoarcus sp. (strain EbN1)</name>
    <dbReference type="NCBI Taxonomy" id="76114"/>
    <lineage>
        <taxon>Bacteria</taxon>
        <taxon>Pseudomonadati</taxon>
        <taxon>Pseudomonadota</taxon>
        <taxon>Betaproteobacteria</taxon>
        <taxon>Rhodocyclales</taxon>
        <taxon>Rhodocyclaceae</taxon>
        <taxon>Aromatoleum</taxon>
    </lineage>
</organism>